<dbReference type="EMBL" id="L26583">
    <property type="protein sequence ID" value="AAA20183.1"/>
    <property type="molecule type" value="Unassigned_DNA"/>
</dbReference>
<dbReference type="PIR" id="S45257">
    <property type="entry name" value="S45257"/>
</dbReference>
<dbReference type="SMR" id="P39440"/>
<dbReference type="eggNOG" id="COG2973">
    <property type="taxonomic scope" value="Bacteria"/>
</dbReference>
<dbReference type="GO" id="GO:0005737">
    <property type="term" value="C:cytoplasm"/>
    <property type="evidence" value="ECO:0007669"/>
    <property type="project" value="UniProtKB-SubCell"/>
</dbReference>
<dbReference type="GO" id="GO:0003700">
    <property type="term" value="F:DNA-binding transcription factor activity"/>
    <property type="evidence" value="ECO:0007669"/>
    <property type="project" value="InterPro"/>
</dbReference>
<dbReference type="GO" id="GO:0043565">
    <property type="term" value="F:sequence-specific DNA binding"/>
    <property type="evidence" value="ECO:0007669"/>
    <property type="project" value="InterPro"/>
</dbReference>
<dbReference type="GO" id="GO:0045892">
    <property type="term" value="P:negative regulation of DNA-templated transcription"/>
    <property type="evidence" value="ECO:0007669"/>
    <property type="project" value="UniProtKB-UniRule"/>
</dbReference>
<dbReference type="FunFam" id="1.10.1270.10:FF:000001">
    <property type="entry name" value="Trp operon repressor"/>
    <property type="match status" value="1"/>
</dbReference>
<dbReference type="Gene3D" id="1.10.1270.10">
    <property type="entry name" value="TrpR-like"/>
    <property type="match status" value="1"/>
</dbReference>
<dbReference type="HAMAP" id="MF_00475">
    <property type="entry name" value="Trp_repressor"/>
    <property type="match status" value="1"/>
</dbReference>
<dbReference type="InterPro" id="IPR000831">
    <property type="entry name" value="Trp_repress"/>
</dbReference>
<dbReference type="InterPro" id="IPR013335">
    <property type="entry name" value="Trp_repress_bac"/>
</dbReference>
<dbReference type="InterPro" id="IPR010921">
    <property type="entry name" value="Trp_repressor/repl_initiator"/>
</dbReference>
<dbReference type="InterPro" id="IPR038116">
    <property type="entry name" value="TrpR-like_sf"/>
</dbReference>
<dbReference type="NCBIfam" id="TIGR01321">
    <property type="entry name" value="TrpR"/>
    <property type="match status" value="1"/>
</dbReference>
<dbReference type="PANTHER" id="PTHR38025">
    <property type="entry name" value="TRP OPERON REPRESSOR"/>
    <property type="match status" value="1"/>
</dbReference>
<dbReference type="PANTHER" id="PTHR38025:SF1">
    <property type="entry name" value="TRP OPERON REPRESSOR"/>
    <property type="match status" value="1"/>
</dbReference>
<dbReference type="Pfam" id="PF01371">
    <property type="entry name" value="Trp_repressor"/>
    <property type="match status" value="1"/>
</dbReference>
<dbReference type="PIRSF" id="PIRSF003196">
    <property type="entry name" value="Trp_repressor"/>
    <property type="match status" value="1"/>
</dbReference>
<dbReference type="SUPFAM" id="SSF48295">
    <property type="entry name" value="TrpR-like"/>
    <property type="match status" value="1"/>
</dbReference>
<comment type="function">
    <text>This protein is an aporepressor. When complexed with L-tryptophan it binds the operator region of the trp operon (5'-ACTAGT-'3') and prevents the initiation of transcription. The complex also regulates trp repressor biosynthesis by binding to its regulatory region.</text>
</comment>
<comment type="subunit">
    <text>Homodimer.</text>
</comment>
<comment type="subcellular location">
    <subcellularLocation>
        <location>Cytoplasm</location>
    </subcellularLocation>
</comment>
<comment type="similarity">
    <text evidence="2">Belongs to the TrpR family.</text>
</comment>
<gene>
    <name type="primary">trpR</name>
</gene>
<feature type="chain" id="PRO_0000196498" description="Trp operon repressor">
    <location>
        <begin position="1"/>
        <end position="109"/>
    </location>
</feature>
<feature type="DNA-binding region" evidence="1">
    <location>
        <begin position="68"/>
        <end position="91"/>
    </location>
</feature>
<sequence>MTQHSPYSSAMAEQRHQEWLRFVELLRQSYDKDLHLPLLQLMLTPDEREALGTRVRIIEELLRGEMSQRELKNELGAGIATITRGSNSLKSAPVELRQWLEQILLGAQR</sequence>
<evidence type="ECO:0000250" key="1"/>
<evidence type="ECO:0000305" key="2"/>
<keyword id="KW-0963">Cytoplasm</keyword>
<keyword id="KW-0238">DNA-binding</keyword>
<keyword id="KW-0678">Repressor</keyword>
<keyword id="KW-0804">Transcription</keyword>
<keyword id="KW-0805">Transcription regulation</keyword>
<organism>
    <name type="scientific">Enterobacter cloacae</name>
    <dbReference type="NCBI Taxonomy" id="550"/>
    <lineage>
        <taxon>Bacteria</taxon>
        <taxon>Pseudomonadati</taxon>
        <taxon>Pseudomonadota</taxon>
        <taxon>Gammaproteobacteria</taxon>
        <taxon>Enterobacterales</taxon>
        <taxon>Enterobacteriaceae</taxon>
        <taxon>Enterobacter</taxon>
        <taxon>Enterobacter cloacae complex</taxon>
    </lineage>
</organism>
<reference key="1">
    <citation type="journal article" date="1994" name="Nucleic Acids Res.">
        <title>The tryptophan repressor sequence is highly conserved among the Enterobacteriaceae.</title>
        <authorList>
            <person name="Arvidson D.N."/>
            <person name="Arvidson C.G."/>
            <person name="Lawson C.L."/>
            <person name="Miner J."/>
            <person name="Adams C."/>
            <person name="Youderian P."/>
        </authorList>
    </citation>
    <scope>NUCLEOTIDE SEQUENCE [GENOMIC DNA]</scope>
</reference>
<accession>P39440</accession>
<proteinExistence type="inferred from homology"/>
<name>TRPR_ENTCL</name>
<protein>
    <recommendedName>
        <fullName>Trp operon repressor</fullName>
    </recommendedName>
</protein>